<feature type="chain" id="PRO_0000164932" description="Endonuclease II">
    <location>
        <begin position="1"/>
        <end position="136"/>
    </location>
</feature>
<feature type="domain" description="GIY-YIG" evidence="1">
    <location>
        <begin position="32"/>
        <end position="131"/>
    </location>
</feature>
<feature type="mutagenesis site" description="Nearly abolishes endonuclease activity." evidence="2">
    <original>G</original>
    <variation>A</variation>
    <location>
        <position position="49"/>
    </location>
</feature>
<feature type="mutagenesis site" description="Nearly abolishes endonuclease activity." evidence="2">
    <original>R</original>
    <variation>A</variation>
    <location>
        <position position="57"/>
    </location>
</feature>
<feature type="mutagenesis site" description="Nearly abolishes endonuclease activity." evidence="2">
    <original>L</original>
    <variation>P</variation>
    <location>
        <position position="84"/>
    </location>
</feature>
<feature type="mutagenesis site" description="Abolishes endonuclease activity." evidence="2">
    <original>E</original>
    <variation>A</variation>
    <location>
        <position position="118"/>
    </location>
</feature>
<feature type="helix" evidence="9">
    <location>
        <begin position="1"/>
        <end position="7"/>
    </location>
</feature>
<feature type="strand" evidence="9">
    <location>
        <begin position="11"/>
        <end position="16"/>
    </location>
</feature>
<feature type="strand" evidence="9">
    <location>
        <begin position="34"/>
        <end position="41"/>
    </location>
</feature>
<feature type="strand" evidence="9">
    <location>
        <begin position="44"/>
        <end position="52"/>
    </location>
</feature>
<feature type="helix" evidence="9">
    <location>
        <begin position="54"/>
        <end position="66"/>
    </location>
</feature>
<feature type="helix" evidence="9">
    <location>
        <begin position="75"/>
        <end position="85"/>
    </location>
</feature>
<feature type="strand" evidence="9">
    <location>
        <begin position="90"/>
        <end position="96"/>
    </location>
</feature>
<feature type="strand" evidence="9">
    <location>
        <begin position="99"/>
        <end position="104"/>
    </location>
</feature>
<feature type="strand" evidence="9">
    <location>
        <begin position="107"/>
        <end position="112"/>
    </location>
</feature>
<feature type="helix" evidence="9">
    <location>
        <begin position="114"/>
        <end position="125"/>
    </location>
</feature>
<organismHost>
    <name type="scientific">Escherichia coli</name>
    <dbReference type="NCBI Taxonomy" id="562"/>
</organismHost>
<organism>
    <name type="scientific">Enterobacteria phage T4</name>
    <name type="common">Bacteriophage T4</name>
    <dbReference type="NCBI Taxonomy" id="10665"/>
    <lineage>
        <taxon>Viruses</taxon>
        <taxon>Duplodnaviria</taxon>
        <taxon>Heunggongvirae</taxon>
        <taxon>Uroviricota</taxon>
        <taxon>Caudoviricetes</taxon>
        <taxon>Straboviridae</taxon>
        <taxon>Tevenvirinae</taxon>
        <taxon>Tequatrovirus</taxon>
    </lineage>
</organism>
<name>END2_BPT4</name>
<dbReference type="EC" id="3.1.21.8" evidence="2 3 5 6"/>
<dbReference type="EMBL" id="X04140">
    <property type="protein sequence ID" value="CAA27759.1"/>
    <property type="molecule type" value="Genomic_DNA"/>
</dbReference>
<dbReference type="EMBL" id="AF158101">
    <property type="protein sequence ID" value="AAD42558.1"/>
    <property type="molecule type" value="Genomic_DNA"/>
</dbReference>
<dbReference type="PIR" id="S08603">
    <property type="entry name" value="ZNBPT4"/>
</dbReference>
<dbReference type="RefSeq" id="NP_049840.1">
    <property type="nucleotide sequence ID" value="NC_000866.4"/>
</dbReference>
<dbReference type="PDB" id="2WSH">
    <property type="method" value="X-ray"/>
    <property type="resolution" value="1.90 A"/>
    <property type="chains" value="A/B/C/D=1-136"/>
</dbReference>
<dbReference type="PDBsum" id="2WSH"/>
<dbReference type="SMR" id="P07059"/>
<dbReference type="GeneID" id="1258710"/>
<dbReference type="KEGG" id="vg:1258710"/>
<dbReference type="OrthoDB" id="13612at10239"/>
<dbReference type="BRENDA" id="3.1.21.8">
    <property type="organism ID" value="732"/>
</dbReference>
<dbReference type="EvolutionaryTrace" id="P07059"/>
<dbReference type="Proteomes" id="UP000009087">
    <property type="component" value="Segment"/>
</dbReference>
<dbReference type="GO" id="GO:0003677">
    <property type="term" value="F:DNA binding"/>
    <property type="evidence" value="ECO:0007669"/>
    <property type="project" value="UniProtKB-KW"/>
</dbReference>
<dbReference type="GO" id="GO:0004519">
    <property type="term" value="F:endonuclease activity"/>
    <property type="evidence" value="ECO:0007669"/>
    <property type="project" value="UniProtKB-KW"/>
</dbReference>
<dbReference type="GO" id="GO:0046872">
    <property type="term" value="F:metal ion binding"/>
    <property type="evidence" value="ECO:0007669"/>
    <property type="project" value="UniProtKB-KW"/>
</dbReference>
<dbReference type="GO" id="GO:0099015">
    <property type="term" value="P:degradation of host chromosome by virus"/>
    <property type="evidence" value="ECO:0007669"/>
    <property type="project" value="UniProtKB-KW"/>
</dbReference>
<dbReference type="GO" id="GO:0039657">
    <property type="term" value="P:symbiont-mediated suppression of host gene expression"/>
    <property type="evidence" value="ECO:0007669"/>
    <property type="project" value="UniProtKB-KW"/>
</dbReference>
<dbReference type="CDD" id="cd10436">
    <property type="entry name" value="GIY-YIG_EndoII_Hpy188I_like"/>
    <property type="match status" value="1"/>
</dbReference>
<dbReference type="Gene3D" id="3.40.1440.40">
    <property type="match status" value="1"/>
</dbReference>
<dbReference type="InterPro" id="IPR044556">
    <property type="entry name" value="EndoII-like_GIY-YIG"/>
</dbReference>
<dbReference type="InterPro" id="IPR000305">
    <property type="entry name" value="GIY-YIG_endonuc"/>
</dbReference>
<dbReference type="InterPro" id="IPR035901">
    <property type="entry name" value="GIY-YIG_endonuc_sf"/>
</dbReference>
<dbReference type="InterPro" id="IPR053748">
    <property type="entry name" value="Host_DNA_Degrad_Endo"/>
</dbReference>
<dbReference type="InterPro" id="IPR016413">
    <property type="entry name" value="Phage_T4_DenA_endoDNaseII"/>
</dbReference>
<dbReference type="Pfam" id="PF01541">
    <property type="entry name" value="GIY-YIG"/>
    <property type="match status" value="1"/>
</dbReference>
<dbReference type="PIRSF" id="PIRSF004362">
    <property type="entry name" value="Endonuclease_II_phage_DenA"/>
    <property type="match status" value="1"/>
</dbReference>
<dbReference type="SMART" id="SM00465">
    <property type="entry name" value="GIYc"/>
    <property type="match status" value="1"/>
</dbReference>
<dbReference type="SUPFAM" id="SSF82771">
    <property type="entry name" value="GIY-YIG endonuclease"/>
    <property type="match status" value="1"/>
</dbReference>
<dbReference type="PROSITE" id="PS50164">
    <property type="entry name" value="GIY_YIG"/>
    <property type="match status" value="1"/>
</dbReference>
<gene>
    <name type="primary">denA</name>
</gene>
<accession>P07059</accession>
<reference key="1">
    <citation type="journal article" date="1986" name="EMBO J.">
        <title>The bacteriophage T4 gene for the small subunit of ribonucleotide reductase contains an intron.</title>
        <authorList>
            <person name="Sjoeberg B.-M."/>
            <person name="Hahne S."/>
            <person name="Mathews C.Z."/>
            <person name="Mathews C.K."/>
            <person name="Rand K.N."/>
            <person name="Gait M.J."/>
        </authorList>
    </citation>
    <scope>NUCLEOTIDE SEQUENCE [GENOMIC DNA]</scope>
</reference>
<reference key="2">
    <citation type="journal article" date="2003" name="Microbiol. Mol. Biol. Rev.">
        <title>Bacteriophage T4 genome.</title>
        <authorList>
            <person name="Miller E.S."/>
            <person name="Kutter E."/>
            <person name="Mosig G."/>
            <person name="Arisaka F."/>
            <person name="Kunisawa T."/>
            <person name="Ruger W."/>
        </authorList>
    </citation>
    <scope>NUCLEOTIDE SEQUENCE [LARGE SCALE GENOMIC DNA]</scope>
</reference>
<reference key="3">
    <citation type="journal article" date="1983" name="J. Virol.">
        <title>In vivo cleavage of cytosine-containing bacteriophage T4 DNA to genetically distinct, discretely sized fragments.</title>
        <authorList>
            <person name="Carlson K."/>
            <person name="Wiberg J.S."/>
        </authorList>
    </citation>
    <scope>FUNCTION IN HOST DNA DEGRADATION</scope>
    <scope>CATALYTIC ACTIVITY</scope>
</reference>
<reference key="4">
    <citation type="journal article" date="1993" name="J. Biol. Chem.">
        <title>DNA determinants of restriction. Bacteriophage T4 endonuclease II-dependent cleavage of plasmid DNA in vivo.</title>
        <authorList>
            <person name="Carlson K."/>
            <person name="Krabbe M."/>
            <person name="Nystroem A.C."/>
            <person name="Kosturko L.D."/>
        </authorList>
    </citation>
    <scope>FUNCTION</scope>
    <scope>CATALYTIC ACTIVITY</scope>
</reference>
<reference key="5">
    <citation type="journal article" date="2008" name="J. Bacteriol.">
        <title>Amino acid residues in the GIY-YIG endonuclease II of phage T4 affecting sequence recognition and binding as well as catalysis.</title>
        <authorList>
            <person name="Lagerbaeck P."/>
            <person name="Carlson K."/>
        </authorList>
    </citation>
    <scope>FUNCTION</scope>
    <scope>CATALYTIC ACTIVITY</scope>
    <scope>COFACTOR</scope>
    <scope>MUTAGENESIS OF GLY-49; ARG-57; LEU-84 AND GLU-118</scope>
</reference>
<reference key="6">
    <citation type="journal article" date="2009" name="Nucleic Acids Res.">
        <title>Bacteriophage T4 endonuclease II, a promiscuous GIY-YIG nuclease, binds as a tetramer to two DNA substrates.</title>
        <authorList>
            <person name="Lagerback P."/>
            <person name="Andersson E."/>
            <person name="Malmberg C."/>
            <person name="Carlson K."/>
        </authorList>
    </citation>
    <scope>SUBUNIT</scope>
    <scope>CATALYTIC ACTIVITY</scope>
    <scope>FUNCTION</scope>
    <scope>DNA-BINDING</scope>
</reference>
<reference key="7">
    <citation type="journal article" date="2010" name="J. Mol. Biol.">
        <title>Structure of bacteriophage T4 endonuclease II mutant E118A, a tetrameric GIY-YIG enzyme.</title>
        <authorList>
            <person name="Andersson C.E."/>
            <person name="Lagerback P."/>
            <person name="Carlson K."/>
        </authorList>
    </citation>
    <scope>X-RAY CRYSTALLOGRAPHY (1.9 ANGSTROMS)</scope>
    <scope>SUBUNIT</scope>
</reference>
<protein>
    <recommendedName>
        <fullName>Endonuclease II</fullName>
        <ecNumber evidence="2 3 5 6">3.1.21.8</ecNumber>
    </recommendedName>
</protein>
<keyword id="KW-0002">3D-structure</keyword>
<keyword id="KW-1261">Bacterial host gene expression shutoff by virus</keyword>
<keyword id="KW-1247">Degradation of host chromosome by virus</keyword>
<keyword id="KW-0238">DNA-binding</keyword>
<keyword id="KW-0255">Endonuclease</keyword>
<keyword id="KW-1190">Host gene expression shutoff by virus</keyword>
<keyword id="KW-0945">Host-virus interaction</keyword>
<keyword id="KW-0378">Hydrolase</keyword>
<keyword id="KW-0460">Magnesium</keyword>
<keyword id="KW-0479">Metal-binding</keyword>
<keyword id="KW-0540">Nuclease</keyword>
<keyword id="KW-1185">Reference proteome</keyword>
<evidence type="ECO:0000255" key="1">
    <source>
        <dbReference type="PROSITE-ProRule" id="PRU00977"/>
    </source>
</evidence>
<evidence type="ECO:0000269" key="2">
    <source>
    </source>
</evidence>
<evidence type="ECO:0000269" key="3">
    <source>
    </source>
</evidence>
<evidence type="ECO:0000269" key="4">
    <source>
    </source>
</evidence>
<evidence type="ECO:0000269" key="5">
    <source>
    </source>
</evidence>
<evidence type="ECO:0000269" key="6">
    <source>
    </source>
</evidence>
<evidence type="ECO:0000303" key="7">
    <source>
    </source>
</evidence>
<evidence type="ECO:0000303" key="8">
    <source>
    </source>
</evidence>
<evidence type="ECO:0007829" key="9">
    <source>
        <dbReference type="PDB" id="2WSH"/>
    </source>
</evidence>
<proteinExistence type="evidence at protein level"/>
<comment type="function">
    <text evidence="2 5 6 7 8">Contributes to the degradation of host DNA, permitting the scavenging of host-derived nucleotides for phage DNA synthesis (PubMed:18539732, PubMed:19666720). Sequence-specific endonuclease. Catalyzes nicking of the bottom strand of double-stranded DNA between the first and second base pair to the right of a top-strand CCGC motif. Does not cleave native phage DNA, which contains 5-hydroxymethylcytosine instead of cytosine.</text>
</comment>
<comment type="catalytic activity">
    <reaction evidence="2 3 5 6">
        <text>Endonucleolytic nicking and cleavage of cytosine-containing double-stranded DNA.</text>
        <dbReference type="EC" id="3.1.21.8"/>
    </reaction>
</comment>
<comment type="cofactor">
    <cofactor evidence="2">
        <name>Mg(2+)</name>
        <dbReference type="ChEBI" id="CHEBI:18420"/>
    </cofactor>
</comment>
<comment type="subunit">
    <text evidence="3 4">Homotetramer.</text>
</comment>
<sequence length="136" mass="15802">MKEIATEYSFIKYTELELDDNGSIKQLSIPNKYNVIYAIAINDELVYIGKTKNLRKRINYYRTAINRKDKTSDSTKSALIHSALKEGSKVEFYARQCFNLSMTNELGTMTIATIDLEEPLFIKLFNPPWNIQHKKK</sequence>